<gene>
    <name evidence="2" type="primary">iaaB</name>
    <name evidence="4" type="synonym">fcs</name>
    <name evidence="3" type="ordered locus">AZOSEA11330</name>
    <name evidence="4" type="ORF">ebA2050</name>
</gene>
<reference key="1">
    <citation type="journal article" date="2005" name="Arch. Microbiol.">
        <title>The genome sequence of an anaerobic aromatic-degrading denitrifying bacterium, strain EbN1.</title>
        <authorList>
            <person name="Rabus R."/>
            <person name="Kube M."/>
            <person name="Heider J."/>
            <person name="Beck A."/>
            <person name="Heitmann K."/>
            <person name="Widdel F."/>
            <person name="Reinhardt R."/>
        </authorList>
    </citation>
    <scope>NUCLEOTIDE SEQUENCE [LARGE SCALE GENOMIC DNA]</scope>
    <source>
        <strain>DSM 19018 / LMG 30748 / EbN1</strain>
    </source>
</reference>
<reference key="2">
    <citation type="journal article" date="2016" name="Environ. Microbiol.">
        <title>An indoleacetate-CoA ligase and a phenylsuccinyl-CoA transferase involved in anaerobic metabolism of auxin.</title>
        <authorList>
            <person name="Schuehle K."/>
            <person name="Nies J."/>
            <person name="Heider J."/>
        </authorList>
    </citation>
    <scope>FUNCTION</scope>
    <scope>CATALYTIC ACTIVITY</scope>
    <scope>ACTIVITY REGULATION</scope>
    <scope>BIOPHYSICOCHEMICAL PROPERTIES</scope>
    <scope>SUBUNIT</scope>
    <source>
        <strain>DSM 19018 / LMG 30748 / EbN1</strain>
    </source>
</reference>
<sequence length="510" mass="55564">MELSEWIDRHAGLEPGKTAIRFPERDLSYAQLAGLVERLASALKASGVAHRSCVAYLGYNSPEMLATLFACARLGALFMPLNWRLAGPEHRQLLADCPPSVLFVEPRFVAQIDAFRDALADVTLVAFDAPPQGWISYEALLERSGDAVPRDPQVGPQTPLLICYTSGTTGKPKGALLSQGALAWNAVNSIDLHELSADDRILTTLPLFHVGGLNNQTTPALSAGATVVLHPKFDADATFDAIEQERITLTVLVPAQLEMMIARPRWQSADLSSLRMITTGSTIVPERLIREVHRRGVPLVQIYGSTETCPIAAYVKPADAQRKAGSAGRAAPHCSLRIVGDDGHDVKPGATGEILVRGPNVMNAYWNDLQASAAVLKDGWFRTGDMGHQDGEGYLWVDGRKKEMIISGGENIYPAEIENLLGESPDIAEVAVVGRLDERWGEVVVAVVVPLEGRTLDAGHVLQLLEGRIARYKLPKEVVFLDELPRTALGKVRKDDVRQLVARKTFMEQT</sequence>
<accession>Q5P603</accession>
<evidence type="ECO:0000269" key="1">
    <source>
    </source>
</evidence>
<evidence type="ECO:0000303" key="2">
    <source>
    </source>
</evidence>
<evidence type="ECO:0000305" key="3"/>
<evidence type="ECO:0000312" key="4">
    <source>
        <dbReference type="EMBL" id="CAI07258.1"/>
    </source>
</evidence>
<keyword id="KW-0067">ATP-binding</keyword>
<keyword id="KW-0436">Ligase</keyword>
<keyword id="KW-0547">Nucleotide-binding</keyword>
<keyword id="KW-1185">Reference proteome</keyword>
<feature type="chain" id="PRO_0000457283" description="Indoleacetate--CoA ligase">
    <location>
        <begin position="1"/>
        <end position="510"/>
    </location>
</feature>
<organism>
    <name type="scientific">Aromatoleum aromaticum (strain DSM 19018 / LMG 30748 / EbN1)</name>
    <name type="common">Azoarcus sp. (strain EbN1)</name>
    <dbReference type="NCBI Taxonomy" id="76114"/>
    <lineage>
        <taxon>Bacteria</taxon>
        <taxon>Pseudomonadati</taxon>
        <taxon>Pseudomonadota</taxon>
        <taxon>Betaproteobacteria</taxon>
        <taxon>Rhodocyclales</taxon>
        <taxon>Rhodocyclaceae</taxon>
        <taxon>Aromatoleum</taxon>
    </lineage>
</organism>
<proteinExistence type="evidence at protein level"/>
<dbReference type="EC" id="6.2.1.75" evidence="1"/>
<dbReference type="EMBL" id="CR555306">
    <property type="protein sequence ID" value="CAI07258.1"/>
    <property type="molecule type" value="Genomic_DNA"/>
</dbReference>
<dbReference type="RefSeq" id="WP_011236979.1">
    <property type="nucleotide sequence ID" value="NC_006513.1"/>
</dbReference>
<dbReference type="SMR" id="Q5P603"/>
<dbReference type="STRING" id="76114.ebA2050"/>
<dbReference type="KEGG" id="eba:ebA2050"/>
<dbReference type="eggNOG" id="COG0318">
    <property type="taxonomic scope" value="Bacteria"/>
</dbReference>
<dbReference type="HOGENOM" id="CLU_000022_59_0_4"/>
<dbReference type="OrthoDB" id="9766486at2"/>
<dbReference type="Proteomes" id="UP000006552">
    <property type="component" value="Chromosome"/>
</dbReference>
<dbReference type="GO" id="GO:0005524">
    <property type="term" value="F:ATP binding"/>
    <property type="evidence" value="ECO:0007669"/>
    <property type="project" value="UniProtKB-KW"/>
</dbReference>
<dbReference type="GO" id="GO:0031956">
    <property type="term" value="F:medium-chain fatty acid-CoA ligase activity"/>
    <property type="evidence" value="ECO:0007669"/>
    <property type="project" value="TreeGrafter"/>
</dbReference>
<dbReference type="GO" id="GO:0006631">
    <property type="term" value="P:fatty acid metabolic process"/>
    <property type="evidence" value="ECO:0007669"/>
    <property type="project" value="TreeGrafter"/>
</dbReference>
<dbReference type="CDD" id="cd17631">
    <property type="entry name" value="FACL_FadD13-like"/>
    <property type="match status" value="1"/>
</dbReference>
<dbReference type="FunFam" id="3.30.300.30:FF:000008">
    <property type="entry name" value="2,3-dihydroxybenzoate-AMP ligase"/>
    <property type="match status" value="1"/>
</dbReference>
<dbReference type="Gene3D" id="3.30.300.30">
    <property type="match status" value="1"/>
</dbReference>
<dbReference type="Gene3D" id="3.40.50.12780">
    <property type="entry name" value="N-terminal domain of ligase-like"/>
    <property type="match status" value="1"/>
</dbReference>
<dbReference type="InterPro" id="IPR025110">
    <property type="entry name" value="AMP-bd_C"/>
</dbReference>
<dbReference type="InterPro" id="IPR045851">
    <property type="entry name" value="AMP-bd_C_sf"/>
</dbReference>
<dbReference type="InterPro" id="IPR020845">
    <property type="entry name" value="AMP-binding_CS"/>
</dbReference>
<dbReference type="InterPro" id="IPR000873">
    <property type="entry name" value="AMP-dep_synth/lig_dom"/>
</dbReference>
<dbReference type="InterPro" id="IPR042099">
    <property type="entry name" value="ANL_N_sf"/>
</dbReference>
<dbReference type="NCBIfam" id="NF004837">
    <property type="entry name" value="PRK06187.1"/>
    <property type="match status" value="1"/>
</dbReference>
<dbReference type="PANTHER" id="PTHR43201">
    <property type="entry name" value="ACYL-COA SYNTHETASE"/>
    <property type="match status" value="1"/>
</dbReference>
<dbReference type="PANTHER" id="PTHR43201:SF5">
    <property type="entry name" value="MEDIUM-CHAIN ACYL-COA LIGASE ACSF2, MITOCHONDRIAL"/>
    <property type="match status" value="1"/>
</dbReference>
<dbReference type="Pfam" id="PF00501">
    <property type="entry name" value="AMP-binding"/>
    <property type="match status" value="1"/>
</dbReference>
<dbReference type="Pfam" id="PF13193">
    <property type="entry name" value="AMP-binding_C"/>
    <property type="match status" value="1"/>
</dbReference>
<dbReference type="SUPFAM" id="SSF56801">
    <property type="entry name" value="Acetyl-CoA synthetase-like"/>
    <property type="match status" value="1"/>
</dbReference>
<dbReference type="PROSITE" id="PS00455">
    <property type="entry name" value="AMP_BINDING"/>
    <property type="match status" value="1"/>
</dbReference>
<protein>
    <recommendedName>
        <fullName evidence="2">Indoleacetate--CoA ligase</fullName>
        <ecNumber evidence="1">6.2.1.75</ecNumber>
    </recommendedName>
</protein>
<name>IAAB_AROAE</name>
<comment type="function">
    <text evidence="1">Involved in degradation of indoleacetate, the most common member of the auxin class of plant hormones (PubMed:27102732). Highly specific indoleacetate-CoA ligase which catalyzes the ATP-dependent activation of indoleacetate (IAA) to indoleacetyl-CoA (PubMed:27102732). Also activates some closely related compounds such as the non-physiological compound (2-naphthyl)acetate and phenylacetate, which seems to be a fortuitous substrate for IaaB (PubMed:27102732).</text>
</comment>
<comment type="catalytic activity">
    <reaction evidence="1">
        <text>(indol-3-yl)acetate + ATP + CoA = (indol-3-yl)acetyl-CoA + AMP + diphosphate</text>
        <dbReference type="Rhea" id="RHEA:69715"/>
        <dbReference type="ChEBI" id="CHEBI:30616"/>
        <dbReference type="ChEBI" id="CHEBI:30854"/>
        <dbReference type="ChEBI" id="CHEBI:33019"/>
        <dbReference type="ChEBI" id="CHEBI:57271"/>
        <dbReference type="ChEBI" id="CHEBI:57287"/>
        <dbReference type="ChEBI" id="CHEBI:456215"/>
        <dbReference type="EC" id="6.2.1.75"/>
    </reaction>
    <physiologicalReaction direction="left-to-right" evidence="1">
        <dbReference type="Rhea" id="RHEA:69716"/>
    </physiologicalReaction>
</comment>
<comment type="catalytic activity">
    <reaction evidence="1">
        <text>(indol-3-yl)acetate + ATP + H(+) = (indol-3-yl)acetyl-AMP + diphosphate</text>
        <dbReference type="Rhea" id="RHEA:69719"/>
        <dbReference type="ChEBI" id="CHEBI:15378"/>
        <dbReference type="ChEBI" id="CHEBI:30616"/>
        <dbReference type="ChEBI" id="CHEBI:30854"/>
        <dbReference type="ChEBI" id="CHEBI:33019"/>
        <dbReference type="ChEBI" id="CHEBI:188353"/>
    </reaction>
    <physiologicalReaction direction="left-to-right" evidence="1">
        <dbReference type="Rhea" id="RHEA:69720"/>
    </physiologicalReaction>
</comment>
<comment type="catalytic activity">
    <reaction evidence="1">
        <text>(indol-3-yl)acetyl-AMP + CoA = (indol-3-yl)acetyl-CoA + AMP + H(+)</text>
        <dbReference type="Rhea" id="RHEA:69723"/>
        <dbReference type="ChEBI" id="CHEBI:15378"/>
        <dbReference type="ChEBI" id="CHEBI:57271"/>
        <dbReference type="ChEBI" id="CHEBI:57287"/>
        <dbReference type="ChEBI" id="CHEBI:188353"/>
        <dbReference type="ChEBI" id="CHEBI:456215"/>
    </reaction>
    <physiologicalReaction direction="left-to-right" evidence="1">
        <dbReference type="Rhea" id="RHEA:69724"/>
    </physiologicalReaction>
</comment>
<comment type="activity regulation">
    <text evidence="1">Inhibited by high concentrations of substrates, and by the synthetic auxin compound 2,4-dichlorophenoxyacetate (2,4-D), which does not serve as substrate.</text>
</comment>
<comment type="biophysicochemical properties">
    <kinetics>
        <KM evidence="1">35 uM for indoleacetate</KM>
        <KM evidence="1">97 uM for (2-naphthyl)acetate</KM>
        <KM evidence="1">420 uM for phenylacetate</KM>
        <KM evidence="1">135 uM for ATP (in the presence of 0.6 mM indoleacetate)</KM>
        <KM evidence="1">800 uM for CoA (in the presence of 0.6 mM indoleacetate)</KM>
        <text evidence="1">kcat is 4.3 sec(-1) with indoleacetate as substrate. kcat is 4.7 sec(-1) with (2-naphthyl)acetate as substrate. kcat is 0.48 sec(-1) with phenylacetate as substrate.</text>
    </kinetics>
</comment>
<comment type="subunit">
    <text evidence="1">Monomer.</text>
</comment>
<comment type="similarity">
    <text evidence="3">Belongs to the ATP-dependent AMP-binding enzyme family.</text>
</comment>